<sequence length="144" mass="16403">MYLNTISPMKKSNHSSKRKGRGIGSGKGKTSGRGHKGQRSRSGGKVRRGFEGGQMPLYRRLPKFGHNKSKKSFFKKEIKLSEFMKIKDSFIDLIVLKKNKIINSKIKIVKIIFSKNFNKKINIKNLKVSKNAKKEIEFFGGTIN</sequence>
<evidence type="ECO:0000255" key="1">
    <source>
        <dbReference type="HAMAP-Rule" id="MF_01341"/>
    </source>
</evidence>
<evidence type="ECO:0000256" key="2">
    <source>
        <dbReference type="SAM" id="MobiDB-lite"/>
    </source>
</evidence>
<evidence type="ECO:0000305" key="3"/>
<proteinExistence type="inferred from homology"/>
<feature type="chain" id="PRO_0000251583" description="Large ribosomal subunit protein uL15">
    <location>
        <begin position="1"/>
        <end position="144"/>
    </location>
</feature>
<feature type="region of interest" description="Disordered" evidence="2">
    <location>
        <begin position="1"/>
        <end position="52"/>
    </location>
</feature>
<feature type="compositionally biased region" description="Basic residues" evidence="2">
    <location>
        <begin position="11"/>
        <end position="21"/>
    </location>
</feature>
<feature type="compositionally biased region" description="Basic residues" evidence="2">
    <location>
        <begin position="30"/>
        <end position="47"/>
    </location>
</feature>
<comment type="function">
    <text evidence="1">Binds to the 23S rRNA.</text>
</comment>
<comment type="subunit">
    <text evidence="1">Part of the 50S ribosomal subunit.</text>
</comment>
<comment type="similarity">
    <text evidence="1">Belongs to the universal ribosomal protein uL15 family.</text>
</comment>
<keyword id="KW-1185">Reference proteome</keyword>
<keyword id="KW-0687">Ribonucleoprotein</keyword>
<keyword id="KW-0689">Ribosomal protein</keyword>
<keyword id="KW-0694">RNA-binding</keyword>
<keyword id="KW-0699">rRNA-binding</keyword>
<organism>
    <name type="scientific">Wigglesworthia glossinidia brevipalpis</name>
    <dbReference type="NCBI Taxonomy" id="36870"/>
    <lineage>
        <taxon>Bacteria</taxon>
        <taxon>Pseudomonadati</taxon>
        <taxon>Pseudomonadota</taxon>
        <taxon>Gammaproteobacteria</taxon>
        <taxon>Enterobacterales</taxon>
        <taxon>Erwiniaceae</taxon>
        <taxon>Wigglesworthia</taxon>
    </lineage>
</organism>
<accession>Q8D1Z3</accession>
<name>RL15_WIGBR</name>
<dbReference type="EMBL" id="BA000021">
    <property type="protein sequence ID" value="BAC24708.1"/>
    <property type="molecule type" value="Genomic_DNA"/>
</dbReference>
<dbReference type="SMR" id="Q8D1Z3"/>
<dbReference type="STRING" id="36870.gene:10369071"/>
<dbReference type="KEGG" id="wbr:rplO"/>
<dbReference type="eggNOG" id="COG0200">
    <property type="taxonomic scope" value="Bacteria"/>
</dbReference>
<dbReference type="HOGENOM" id="CLU_055188_4_2_6"/>
<dbReference type="OrthoDB" id="9810293at2"/>
<dbReference type="Proteomes" id="UP000000562">
    <property type="component" value="Chromosome"/>
</dbReference>
<dbReference type="GO" id="GO:0022625">
    <property type="term" value="C:cytosolic large ribosomal subunit"/>
    <property type="evidence" value="ECO:0007669"/>
    <property type="project" value="TreeGrafter"/>
</dbReference>
<dbReference type="GO" id="GO:0019843">
    <property type="term" value="F:rRNA binding"/>
    <property type="evidence" value="ECO:0007669"/>
    <property type="project" value="UniProtKB-UniRule"/>
</dbReference>
<dbReference type="GO" id="GO:0003735">
    <property type="term" value="F:structural constituent of ribosome"/>
    <property type="evidence" value="ECO:0007669"/>
    <property type="project" value="InterPro"/>
</dbReference>
<dbReference type="GO" id="GO:0006412">
    <property type="term" value="P:translation"/>
    <property type="evidence" value="ECO:0007669"/>
    <property type="project" value="UniProtKB-UniRule"/>
</dbReference>
<dbReference type="Gene3D" id="3.100.10.10">
    <property type="match status" value="1"/>
</dbReference>
<dbReference type="HAMAP" id="MF_01341">
    <property type="entry name" value="Ribosomal_uL15"/>
    <property type="match status" value="1"/>
</dbReference>
<dbReference type="InterPro" id="IPR030878">
    <property type="entry name" value="Ribosomal_uL15"/>
</dbReference>
<dbReference type="InterPro" id="IPR021131">
    <property type="entry name" value="Ribosomal_uL15/eL18"/>
</dbReference>
<dbReference type="InterPro" id="IPR036227">
    <property type="entry name" value="Ribosomal_uL15/eL18_sf"/>
</dbReference>
<dbReference type="InterPro" id="IPR005749">
    <property type="entry name" value="Ribosomal_uL15_bac-type"/>
</dbReference>
<dbReference type="NCBIfam" id="TIGR01071">
    <property type="entry name" value="rplO_bact"/>
    <property type="match status" value="1"/>
</dbReference>
<dbReference type="PANTHER" id="PTHR12934">
    <property type="entry name" value="50S RIBOSOMAL PROTEIN L15"/>
    <property type="match status" value="1"/>
</dbReference>
<dbReference type="PANTHER" id="PTHR12934:SF11">
    <property type="entry name" value="LARGE RIBOSOMAL SUBUNIT PROTEIN UL15M"/>
    <property type="match status" value="1"/>
</dbReference>
<dbReference type="Pfam" id="PF00828">
    <property type="entry name" value="Ribosomal_L27A"/>
    <property type="match status" value="1"/>
</dbReference>
<dbReference type="SUPFAM" id="SSF52080">
    <property type="entry name" value="Ribosomal proteins L15p and L18e"/>
    <property type="match status" value="1"/>
</dbReference>
<protein>
    <recommendedName>
        <fullName evidence="1">Large ribosomal subunit protein uL15</fullName>
    </recommendedName>
    <alternativeName>
        <fullName evidence="3">50S ribosomal protein L15</fullName>
    </alternativeName>
</protein>
<gene>
    <name evidence="1" type="primary">rplO</name>
    <name type="ordered locus">WIGBR5620</name>
</gene>
<reference key="1">
    <citation type="journal article" date="2002" name="Nat. Genet.">
        <title>Genome sequence of the endocellular obligate symbiont of tsetse flies, Wigglesworthia glossinidia.</title>
        <authorList>
            <person name="Akman L."/>
            <person name="Yamashita A."/>
            <person name="Watanabe H."/>
            <person name="Oshima K."/>
            <person name="Shiba T."/>
            <person name="Hattori M."/>
            <person name="Aksoy S."/>
        </authorList>
    </citation>
    <scope>NUCLEOTIDE SEQUENCE [LARGE SCALE GENOMIC DNA]</scope>
</reference>